<dbReference type="EMBL" id="CM003153">
    <property type="protein sequence ID" value="KIS67310.1"/>
    <property type="molecule type" value="Genomic_DNA"/>
</dbReference>
<dbReference type="RefSeq" id="XP_011391106.1">
    <property type="nucleotide sequence ID" value="XM_011392804.1"/>
</dbReference>
<dbReference type="SMR" id="Q4P652"/>
<dbReference type="FunCoup" id="Q4P652">
    <property type="interactions" value="648"/>
</dbReference>
<dbReference type="STRING" id="237631.Q4P652"/>
<dbReference type="EnsemblFungi" id="KIS67310">
    <property type="protein sequence ID" value="KIS67310"/>
    <property type="gene ID" value="UMAG_04411"/>
</dbReference>
<dbReference type="GeneID" id="23564605"/>
<dbReference type="KEGG" id="uma:UMAG_04411"/>
<dbReference type="VEuPathDB" id="FungiDB:UMAG_04411"/>
<dbReference type="eggNOG" id="KOG0050">
    <property type="taxonomic scope" value="Eukaryota"/>
</dbReference>
<dbReference type="HOGENOM" id="CLU_009082_0_0_1"/>
<dbReference type="InParanoid" id="Q4P652"/>
<dbReference type="OMA" id="KMGMAGE"/>
<dbReference type="OrthoDB" id="1410009at2759"/>
<dbReference type="Proteomes" id="UP000000561">
    <property type="component" value="Chromosome 14"/>
</dbReference>
<dbReference type="GO" id="GO:0005829">
    <property type="term" value="C:cytosol"/>
    <property type="evidence" value="ECO:0007669"/>
    <property type="project" value="EnsemblFungi"/>
</dbReference>
<dbReference type="GO" id="GO:0140602">
    <property type="term" value="C:nucleolar peripheral inclusion body"/>
    <property type="evidence" value="ECO:0007669"/>
    <property type="project" value="EnsemblFungi"/>
</dbReference>
<dbReference type="GO" id="GO:0071014">
    <property type="term" value="C:post-mRNA release spliceosomal complex"/>
    <property type="evidence" value="ECO:0007669"/>
    <property type="project" value="EnsemblFungi"/>
</dbReference>
<dbReference type="GO" id="GO:0000974">
    <property type="term" value="C:Prp19 complex"/>
    <property type="evidence" value="ECO:0000318"/>
    <property type="project" value="GO_Central"/>
</dbReference>
<dbReference type="GO" id="GO:0005681">
    <property type="term" value="C:spliceosomal complex"/>
    <property type="evidence" value="ECO:0000318"/>
    <property type="project" value="GO_Central"/>
</dbReference>
<dbReference type="GO" id="GO:0003677">
    <property type="term" value="F:DNA binding"/>
    <property type="evidence" value="ECO:0007669"/>
    <property type="project" value="UniProtKB-KW"/>
</dbReference>
<dbReference type="GO" id="GO:0045292">
    <property type="term" value="P:mRNA cis splicing, via spliceosome"/>
    <property type="evidence" value="ECO:0007669"/>
    <property type="project" value="EnsemblFungi"/>
</dbReference>
<dbReference type="GO" id="GO:0000398">
    <property type="term" value="P:mRNA splicing, via spliceosome"/>
    <property type="evidence" value="ECO:0000318"/>
    <property type="project" value="GO_Central"/>
</dbReference>
<dbReference type="CDD" id="cd00167">
    <property type="entry name" value="SANT"/>
    <property type="match status" value="1"/>
</dbReference>
<dbReference type="CDD" id="cd11659">
    <property type="entry name" value="SANT_CDC5_II"/>
    <property type="match status" value="1"/>
</dbReference>
<dbReference type="FunFam" id="1.10.10.60:FF:000021">
    <property type="entry name" value="CDC5 cell division cycle 5-like"/>
    <property type="match status" value="1"/>
</dbReference>
<dbReference type="Gene3D" id="1.10.10.60">
    <property type="entry name" value="Homeodomain-like"/>
    <property type="match status" value="2"/>
</dbReference>
<dbReference type="InterPro" id="IPR047242">
    <property type="entry name" value="CDC5L/Cef1"/>
</dbReference>
<dbReference type="InterPro" id="IPR021786">
    <property type="entry name" value="Cdc5p/Cef1_C"/>
</dbReference>
<dbReference type="InterPro" id="IPR009057">
    <property type="entry name" value="Homeodomain-like_sf"/>
</dbReference>
<dbReference type="InterPro" id="IPR017930">
    <property type="entry name" value="Myb_dom"/>
</dbReference>
<dbReference type="InterPro" id="IPR001005">
    <property type="entry name" value="SANT/Myb"/>
</dbReference>
<dbReference type="InterPro" id="IPR047240">
    <property type="entry name" value="SANT_CDC5L_II"/>
</dbReference>
<dbReference type="PANTHER" id="PTHR45885">
    <property type="entry name" value="CELL DIVISION CYCLE 5-LIKE PROTEIN"/>
    <property type="match status" value="1"/>
</dbReference>
<dbReference type="PANTHER" id="PTHR45885:SF1">
    <property type="entry name" value="CELL DIVISION CYCLE 5-LIKE PROTEIN"/>
    <property type="match status" value="1"/>
</dbReference>
<dbReference type="Pfam" id="PF11831">
    <property type="entry name" value="Myb_Cef"/>
    <property type="match status" value="1"/>
</dbReference>
<dbReference type="Pfam" id="PF13921">
    <property type="entry name" value="Myb_DNA-bind_6"/>
    <property type="match status" value="1"/>
</dbReference>
<dbReference type="SMART" id="SM00717">
    <property type="entry name" value="SANT"/>
    <property type="match status" value="2"/>
</dbReference>
<dbReference type="SUPFAM" id="SSF46689">
    <property type="entry name" value="Homeodomain-like"/>
    <property type="match status" value="1"/>
</dbReference>
<dbReference type="PROSITE" id="PS51294">
    <property type="entry name" value="HTH_MYB"/>
    <property type="match status" value="2"/>
</dbReference>
<protein>
    <recommendedName>
        <fullName>Pre-mRNA-splicing factor CEF1</fullName>
    </recommendedName>
</protein>
<comment type="function">
    <text evidence="1">Involved in pre-mRNA splicing and cell cycle control.</text>
</comment>
<comment type="subunit">
    <text evidence="1">Associated with the spliceosome.</text>
</comment>
<comment type="subcellular location">
    <subcellularLocation>
        <location evidence="1">Cytoplasm</location>
    </subcellularLocation>
    <subcellularLocation>
        <location evidence="3">Nucleus</location>
    </subcellularLocation>
</comment>
<comment type="similarity">
    <text evidence="5">Belongs to the CEF1 family.</text>
</comment>
<name>CEF1_MYCMD</name>
<evidence type="ECO:0000250" key="1"/>
<evidence type="ECO:0000255" key="2"/>
<evidence type="ECO:0000255" key="3">
    <source>
        <dbReference type="PROSITE-ProRule" id="PRU00625"/>
    </source>
</evidence>
<evidence type="ECO:0000256" key="4">
    <source>
        <dbReference type="SAM" id="MobiDB-lite"/>
    </source>
</evidence>
<evidence type="ECO:0000305" key="5"/>
<sequence>MVRVIIKGGVWKNTEDEILKAAISKYGKNQWARISSLLVRKTPKQCKARWYEWLDPSIKKTEWSKEEDEKLLHLAKLMPTQWRTIAPLVGRTANHCLERYQKLLDQAEAQDNQATSSSLGLIGTGEAVPSADDVRRLRPGEIDPDPETKPARPDPIDMDEDEKEMLSEARARLANTQGKKAKRKARERALEQSRRLAMLQKRRELKAAGITIKQKPKKGSVDYNADVPFEKKPLPGFYDTSAETSKSYKAPIGKTLQELNNRNAGPEDATKSKRQREAEEKNKQAKQPIAGPSDEHIRKLKEADQITKRRKLNLPAAQVGQDELEAIVKIGLAGERARFLVQDGSSDATDSLLENYSALDSAKATRTPQLAAHEDSVMREANHLRLISSMQTPLLGDVNVDLQSSKSSGIQTPGSFVPQTPNPLLTPGLRNGQTPASASDSRLHADTSTPQRTPLRDNLGLNVDDSFQAGHETPRELKRARSLAQSHLRQSLSSLPAPKNDFDIVVDEQDVELQANSSSRLDNEPAMSEEDAAERDARLARQAAEEEARSEARRSQVVRRNLPRPAQVDLSRLHNQIDSRYRDRVELLVARETAQLLHHDANVHPIAGGKHPEPEAVQFDTLSDTSLITARELMRKELAEQLGFPGANQEALKRMVAASLNDDEEGMQRLEDALKQQWYEARNNKSQLVEQLEVTRAKMARIASQAAKGEKMLTKVLGGYQARSVALLNSTKEQFKALQEAAISRETFEYLGRGEQCGKADRLDSLRKEVESLARRESMAQTAYKLLAEERSTLQEHCEMLEMELLMRQAESLNEANLSA</sequence>
<accession>Q4P652</accession>
<accession>A0A0D1DXS3</accession>
<reference key="1">
    <citation type="journal article" date="2006" name="Nature">
        <title>Insights from the genome of the biotrophic fungal plant pathogen Ustilago maydis.</title>
        <authorList>
            <person name="Kaemper J."/>
            <person name="Kahmann R."/>
            <person name="Boelker M."/>
            <person name="Ma L.-J."/>
            <person name="Brefort T."/>
            <person name="Saville B.J."/>
            <person name="Banuett F."/>
            <person name="Kronstad J.W."/>
            <person name="Gold S.E."/>
            <person name="Mueller O."/>
            <person name="Perlin M.H."/>
            <person name="Woesten H.A.B."/>
            <person name="de Vries R."/>
            <person name="Ruiz-Herrera J."/>
            <person name="Reynaga-Pena C.G."/>
            <person name="Snetselaar K."/>
            <person name="McCann M."/>
            <person name="Perez-Martin J."/>
            <person name="Feldbruegge M."/>
            <person name="Basse C.W."/>
            <person name="Steinberg G."/>
            <person name="Ibeas J.I."/>
            <person name="Holloman W."/>
            <person name="Guzman P."/>
            <person name="Farman M.L."/>
            <person name="Stajich J.E."/>
            <person name="Sentandreu R."/>
            <person name="Gonzalez-Prieto J.M."/>
            <person name="Kennell J.C."/>
            <person name="Molina L."/>
            <person name="Schirawski J."/>
            <person name="Mendoza-Mendoza A."/>
            <person name="Greilinger D."/>
            <person name="Muench K."/>
            <person name="Roessel N."/>
            <person name="Scherer M."/>
            <person name="Vranes M."/>
            <person name="Ladendorf O."/>
            <person name="Vincon V."/>
            <person name="Fuchs U."/>
            <person name="Sandrock B."/>
            <person name="Meng S."/>
            <person name="Ho E.C.H."/>
            <person name="Cahill M.J."/>
            <person name="Boyce K.J."/>
            <person name="Klose J."/>
            <person name="Klosterman S.J."/>
            <person name="Deelstra H.J."/>
            <person name="Ortiz-Castellanos L."/>
            <person name="Li W."/>
            <person name="Sanchez-Alonso P."/>
            <person name="Schreier P.H."/>
            <person name="Haeuser-Hahn I."/>
            <person name="Vaupel M."/>
            <person name="Koopmann E."/>
            <person name="Friedrich G."/>
            <person name="Voss H."/>
            <person name="Schlueter T."/>
            <person name="Margolis J."/>
            <person name="Platt D."/>
            <person name="Swimmer C."/>
            <person name="Gnirke A."/>
            <person name="Chen F."/>
            <person name="Vysotskaia V."/>
            <person name="Mannhaupt G."/>
            <person name="Gueldener U."/>
            <person name="Muensterkoetter M."/>
            <person name="Haase D."/>
            <person name="Oesterheld M."/>
            <person name="Mewes H.-W."/>
            <person name="Mauceli E.W."/>
            <person name="DeCaprio D."/>
            <person name="Wade C.M."/>
            <person name="Butler J."/>
            <person name="Young S.K."/>
            <person name="Jaffe D.B."/>
            <person name="Calvo S.E."/>
            <person name="Nusbaum C."/>
            <person name="Galagan J.E."/>
            <person name="Birren B.W."/>
        </authorList>
    </citation>
    <scope>NUCLEOTIDE SEQUENCE [LARGE SCALE GENOMIC DNA]</scope>
    <source>
        <strain>DSM 14603 / FGSC 9021 / UM521</strain>
    </source>
</reference>
<reference key="2">
    <citation type="submission" date="2014-09" db="EMBL/GenBank/DDBJ databases">
        <authorList>
            <person name="Gueldener U."/>
            <person name="Muensterkoetter M."/>
            <person name="Walter M.C."/>
            <person name="Mannhaupt G."/>
            <person name="Kahmann R."/>
        </authorList>
    </citation>
    <scope>GENOME REANNOTATION</scope>
    <source>
        <strain>DSM 14603 / FGSC 9021 / UM521</strain>
    </source>
</reference>
<proteinExistence type="inferred from homology"/>
<feature type="chain" id="PRO_0000197105" description="Pre-mRNA-splicing factor CEF1">
    <location>
        <begin position="1"/>
        <end position="820"/>
    </location>
</feature>
<feature type="domain" description="HTH myb-type 1" evidence="3">
    <location>
        <begin position="3"/>
        <end position="58"/>
    </location>
</feature>
<feature type="domain" description="HTH myb-type 2" evidence="3">
    <location>
        <begin position="59"/>
        <end position="108"/>
    </location>
</feature>
<feature type="DNA-binding region" description="H-T-H motif" evidence="3">
    <location>
        <begin position="31"/>
        <end position="54"/>
    </location>
</feature>
<feature type="DNA-binding region" description="H-T-H motif" evidence="3">
    <location>
        <begin position="82"/>
        <end position="104"/>
    </location>
</feature>
<feature type="region of interest" description="Disordered" evidence="4">
    <location>
        <begin position="114"/>
        <end position="162"/>
    </location>
</feature>
<feature type="region of interest" description="Disordered" evidence="4">
    <location>
        <begin position="248"/>
        <end position="294"/>
    </location>
</feature>
<feature type="region of interest" description="Disordered" evidence="4">
    <location>
        <begin position="405"/>
        <end position="476"/>
    </location>
</feature>
<feature type="region of interest" description="Disordered" evidence="4">
    <location>
        <begin position="514"/>
        <end position="560"/>
    </location>
</feature>
<feature type="coiled-coil region" evidence="2">
    <location>
        <begin position="160"/>
        <end position="205"/>
    </location>
</feature>
<feature type="coiled-coil region" evidence="2">
    <location>
        <begin position="526"/>
        <end position="562"/>
    </location>
</feature>
<feature type="coiled-coil region" evidence="2">
    <location>
        <begin position="761"/>
        <end position="805"/>
    </location>
</feature>
<feature type="compositionally biased region" description="Basic and acidic residues" evidence="4">
    <location>
        <begin position="132"/>
        <end position="155"/>
    </location>
</feature>
<feature type="compositionally biased region" description="Basic and acidic residues" evidence="4">
    <location>
        <begin position="268"/>
        <end position="283"/>
    </location>
</feature>
<feature type="compositionally biased region" description="Polar residues" evidence="4">
    <location>
        <begin position="405"/>
        <end position="423"/>
    </location>
</feature>
<feature type="compositionally biased region" description="Polar residues" evidence="4">
    <location>
        <begin position="431"/>
        <end position="452"/>
    </location>
</feature>
<feature type="compositionally biased region" description="Basic and acidic residues" evidence="4">
    <location>
        <begin position="534"/>
        <end position="554"/>
    </location>
</feature>
<organism>
    <name type="scientific">Mycosarcoma maydis</name>
    <name type="common">Corn smut fungus</name>
    <name type="synonym">Ustilago maydis</name>
    <dbReference type="NCBI Taxonomy" id="5270"/>
    <lineage>
        <taxon>Eukaryota</taxon>
        <taxon>Fungi</taxon>
        <taxon>Dikarya</taxon>
        <taxon>Basidiomycota</taxon>
        <taxon>Ustilaginomycotina</taxon>
        <taxon>Ustilaginomycetes</taxon>
        <taxon>Ustilaginales</taxon>
        <taxon>Ustilaginaceae</taxon>
        <taxon>Mycosarcoma</taxon>
    </lineage>
</organism>
<keyword id="KW-0175">Coiled coil</keyword>
<keyword id="KW-0963">Cytoplasm</keyword>
<keyword id="KW-0238">DNA-binding</keyword>
<keyword id="KW-0507">mRNA processing</keyword>
<keyword id="KW-0508">mRNA splicing</keyword>
<keyword id="KW-0539">Nucleus</keyword>
<keyword id="KW-1185">Reference proteome</keyword>
<keyword id="KW-0677">Repeat</keyword>
<keyword id="KW-0747">Spliceosome</keyword>
<gene>
    <name type="primary">CEF1</name>
    <name type="ORF">UMAG_04411</name>
</gene>